<dbReference type="EC" id="1.-.-.-"/>
<dbReference type="EMBL" id="AY725196">
    <property type="protein sequence ID" value="AAU11505.1"/>
    <property type="molecule type" value="mRNA"/>
</dbReference>
<dbReference type="EMBL" id="AK085899">
    <property type="protein sequence ID" value="BAC39563.1"/>
    <property type="status" value="ALT_FRAME"/>
    <property type="molecule type" value="mRNA"/>
</dbReference>
<dbReference type="EMBL" id="AK136773">
    <property type="protein sequence ID" value="BAE23126.1"/>
    <property type="molecule type" value="mRNA"/>
</dbReference>
<dbReference type="EMBL" id="AK145230">
    <property type="protein sequence ID" value="BAE26313.1"/>
    <property type="molecule type" value="mRNA"/>
</dbReference>
<dbReference type="EMBL" id="AL806512">
    <property type="status" value="NOT_ANNOTATED_CDS"/>
    <property type="molecule type" value="Genomic_DNA"/>
</dbReference>
<dbReference type="EMBL" id="BX005031">
    <property type="status" value="NOT_ANNOTATED_CDS"/>
    <property type="molecule type" value="Genomic_DNA"/>
</dbReference>
<dbReference type="EMBL" id="BC002211">
    <property type="protein sequence ID" value="AAH02211.1"/>
    <property type="molecule type" value="mRNA"/>
</dbReference>
<dbReference type="CCDS" id="CCDS38772.1"/>
<dbReference type="RefSeq" id="NP_077217.2">
    <property type="nucleotide sequence ID" value="NM_024255.3"/>
</dbReference>
<dbReference type="SMR" id="Q2TPA8"/>
<dbReference type="BioGRID" id="215391">
    <property type="interactions" value="30"/>
</dbReference>
<dbReference type="FunCoup" id="Q2TPA8">
    <property type="interactions" value="2131"/>
</dbReference>
<dbReference type="IntAct" id="Q2TPA8">
    <property type="interactions" value="1"/>
</dbReference>
<dbReference type="MINT" id="Q2TPA8"/>
<dbReference type="STRING" id="10090.ENSMUSP00000030078"/>
<dbReference type="GlyGen" id="Q2TPA8">
    <property type="glycosylation" value="1 site, 1 O-linked glycan (1 site)"/>
</dbReference>
<dbReference type="iPTMnet" id="Q2TPA8"/>
<dbReference type="PhosphoSitePlus" id="Q2TPA8"/>
<dbReference type="SwissPalm" id="Q2TPA8"/>
<dbReference type="REPRODUCTION-2DPAGE" id="Q2TPA8"/>
<dbReference type="jPOST" id="Q2TPA8"/>
<dbReference type="PaxDb" id="10090-ENSMUSP00000030078"/>
<dbReference type="PeptideAtlas" id="Q2TPA8"/>
<dbReference type="ProteomicsDB" id="273388"/>
<dbReference type="Pumba" id="Q2TPA8"/>
<dbReference type="Antibodypedia" id="29681">
    <property type="antibodies" value="149 antibodies from 23 providers"/>
</dbReference>
<dbReference type="DNASU" id="72479"/>
<dbReference type="Ensembl" id="ENSMUST00000030078.12">
    <property type="protein sequence ID" value="ENSMUSP00000030078.6"/>
    <property type="gene ID" value="ENSMUSG00000028383.18"/>
</dbReference>
<dbReference type="GeneID" id="72479"/>
<dbReference type="KEGG" id="mmu:72479"/>
<dbReference type="UCSC" id="uc008szy.3">
    <property type="organism name" value="mouse"/>
</dbReference>
<dbReference type="AGR" id="MGI:1919729"/>
<dbReference type="CTD" id="84263"/>
<dbReference type="MGI" id="MGI:1919729">
    <property type="gene designation" value="Hsdl2"/>
</dbReference>
<dbReference type="VEuPathDB" id="HostDB:ENSMUSG00000028383"/>
<dbReference type="eggNOG" id="KOG0725">
    <property type="taxonomic scope" value="Eukaryota"/>
</dbReference>
<dbReference type="eggNOG" id="KOG4170">
    <property type="taxonomic scope" value="Eukaryota"/>
</dbReference>
<dbReference type="GeneTree" id="ENSGT00940000156729"/>
<dbReference type="HOGENOM" id="CLU_010194_25_0_1"/>
<dbReference type="InParanoid" id="Q2TPA8"/>
<dbReference type="OMA" id="WWSSVAN"/>
<dbReference type="OrthoDB" id="5327538at2759"/>
<dbReference type="PhylomeDB" id="Q2TPA8"/>
<dbReference type="TreeFam" id="TF101523"/>
<dbReference type="BioGRID-ORCS" id="72479">
    <property type="hits" value="3 hits in 77 CRISPR screens"/>
</dbReference>
<dbReference type="ChiTaRS" id="Hsdl2">
    <property type="organism name" value="mouse"/>
</dbReference>
<dbReference type="PRO" id="PR:Q2TPA8"/>
<dbReference type="Proteomes" id="UP000000589">
    <property type="component" value="Chromosome 4"/>
</dbReference>
<dbReference type="RNAct" id="Q2TPA8">
    <property type="molecule type" value="protein"/>
</dbReference>
<dbReference type="Bgee" id="ENSMUSG00000028383">
    <property type="expression patterns" value="Expressed in cardiac muscle of left ventricle and 256 other cell types or tissues"/>
</dbReference>
<dbReference type="ExpressionAtlas" id="Q2TPA8">
    <property type="expression patterns" value="baseline and differential"/>
</dbReference>
<dbReference type="GO" id="GO:0005739">
    <property type="term" value="C:mitochondrion"/>
    <property type="evidence" value="ECO:0000314"/>
    <property type="project" value="UniProtKB"/>
</dbReference>
<dbReference type="GO" id="GO:0005777">
    <property type="term" value="C:peroxisome"/>
    <property type="evidence" value="ECO:0007669"/>
    <property type="project" value="UniProtKB-SubCell"/>
</dbReference>
<dbReference type="GO" id="GO:0016491">
    <property type="term" value="F:oxidoreductase activity"/>
    <property type="evidence" value="ECO:0007669"/>
    <property type="project" value="UniProtKB-KW"/>
</dbReference>
<dbReference type="GO" id="GO:0042632">
    <property type="term" value="P:cholesterol homeostasis"/>
    <property type="evidence" value="ECO:0000314"/>
    <property type="project" value="UniProtKB"/>
</dbReference>
<dbReference type="CDD" id="cd09762">
    <property type="entry name" value="HSDL2_SDR_c"/>
    <property type="match status" value="1"/>
</dbReference>
<dbReference type="FunFam" id="3.40.50.720:FF:000301">
    <property type="entry name" value="Hydroxysteroid dehydrogenase like 2"/>
    <property type="match status" value="1"/>
</dbReference>
<dbReference type="FunFam" id="3.30.1050.10:FF:000005">
    <property type="entry name" value="hydroxysteroid dehydrogenase-like protein 2 isoform X1"/>
    <property type="match status" value="1"/>
</dbReference>
<dbReference type="Gene3D" id="3.40.50.720">
    <property type="entry name" value="NAD(P)-binding Rossmann-like Domain"/>
    <property type="match status" value="1"/>
</dbReference>
<dbReference type="Gene3D" id="3.30.1050.10">
    <property type="entry name" value="SCP2 sterol-binding domain"/>
    <property type="match status" value="1"/>
</dbReference>
<dbReference type="InterPro" id="IPR051935">
    <property type="entry name" value="HSDL2"/>
</dbReference>
<dbReference type="InterPro" id="IPR036291">
    <property type="entry name" value="NAD(P)-bd_dom_sf"/>
</dbReference>
<dbReference type="InterPro" id="IPR003033">
    <property type="entry name" value="SCP2_sterol-bd_dom"/>
</dbReference>
<dbReference type="InterPro" id="IPR036527">
    <property type="entry name" value="SCP2_sterol-bd_dom_sf"/>
</dbReference>
<dbReference type="InterPro" id="IPR002347">
    <property type="entry name" value="SDR_fam"/>
</dbReference>
<dbReference type="NCBIfam" id="NF006133">
    <property type="entry name" value="PRK08278.1"/>
    <property type="match status" value="1"/>
</dbReference>
<dbReference type="PANTHER" id="PTHR42808">
    <property type="entry name" value="HYDROXYSTEROID DEHYDROGENASE-LIKE PROTEIN 2"/>
    <property type="match status" value="1"/>
</dbReference>
<dbReference type="PANTHER" id="PTHR42808:SF3">
    <property type="entry name" value="HYDROXYSTEROID DEHYDROGENASE-LIKE PROTEIN 2"/>
    <property type="match status" value="1"/>
</dbReference>
<dbReference type="Pfam" id="PF00106">
    <property type="entry name" value="adh_short"/>
    <property type="match status" value="1"/>
</dbReference>
<dbReference type="Pfam" id="PF02036">
    <property type="entry name" value="SCP2"/>
    <property type="match status" value="1"/>
</dbReference>
<dbReference type="PRINTS" id="PR00081">
    <property type="entry name" value="GDHRDH"/>
</dbReference>
<dbReference type="SUPFAM" id="SSF51735">
    <property type="entry name" value="NAD(P)-binding Rossmann-fold domains"/>
    <property type="match status" value="1"/>
</dbReference>
<dbReference type="SUPFAM" id="SSF55718">
    <property type="entry name" value="SCP-like"/>
    <property type="match status" value="1"/>
</dbReference>
<feature type="chain" id="PRO_0000319889" description="Hydroxysteroid dehydrogenase-like protein 2">
    <location>
        <begin position="1"/>
        <end position="490"/>
    </location>
</feature>
<feature type="domain" description="SCP2">
    <location>
        <begin position="380"/>
        <end position="487"/>
    </location>
</feature>
<feature type="region of interest" description="Disordered" evidence="3">
    <location>
        <begin position="282"/>
        <end position="370"/>
    </location>
</feature>
<feature type="compositionally biased region" description="Basic and acidic residues" evidence="3">
    <location>
        <begin position="282"/>
        <end position="301"/>
    </location>
</feature>
<feature type="compositionally biased region" description="Low complexity" evidence="3">
    <location>
        <begin position="302"/>
        <end position="367"/>
    </location>
</feature>
<feature type="active site" description="Proton acceptor" evidence="2">
    <location>
        <position position="168"/>
    </location>
</feature>
<feature type="binding site" evidence="1">
    <location>
        <begin position="17"/>
        <end position="23"/>
    </location>
    <ligand>
        <name>NADP(+)</name>
        <dbReference type="ChEBI" id="CHEBI:58349"/>
    </ligand>
</feature>
<feature type="binding site" evidence="1">
    <location>
        <position position="42"/>
    </location>
    <ligand>
        <name>NADP(+)</name>
        <dbReference type="ChEBI" id="CHEBI:58349"/>
    </ligand>
</feature>
<feature type="binding site" evidence="1">
    <location>
        <position position="74"/>
    </location>
    <ligand>
        <name>NADP(+)</name>
        <dbReference type="ChEBI" id="CHEBI:58349"/>
    </ligand>
</feature>
<feature type="binding site" evidence="1">
    <location>
        <position position="172"/>
    </location>
    <ligand>
        <name>NADP(+)</name>
        <dbReference type="ChEBI" id="CHEBI:58349"/>
    </ligand>
</feature>
<feature type="modified residue" description="N6-(2-hydroxyisobutyryl)lysine" evidence="1">
    <location>
        <position position="42"/>
    </location>
</feature>
<feature type="modified residue" description="N6-acetyllysine" evidence="7">
    <location>
        <position position="116"/>
    </location>
</feature>
<feature type="modified residue" description="N6-succinyllysine" evidence="8">
    <location>
        <position position="390"/>
    </location>
</feature>
<feature type="sequence conflict" description="In Ref. 2; BAE23126." evidence="6" ref="2">
    <original>L</original>
    <variation>V</variation>
    <location>
        <position position="307"/>
    </location>
</feature>
<feature type="sequence conflict" description="In Ref. 2; BAE26313." evidence="6" ref="2">
    <original>K</original>
    <variation>KPQLQEKPQLQEQ</variation>
    <location>
        <position position="328"/>
    </location>
</feature>
<feature type="sequence conflict" description="In Ref. 4; AAH02211." evidence="6" ref="4">
    <original>E</original>
    <variation>EQPQLQQ</variation>
    <location>
        <position position="333"/>
    </location>
</feature>
<feature type="sequence conflict" description="In Ref. 2; BAE26313." evidence="6" ref="2">
    <original>Q</original>
    <variation>K</variation>
    <location>
        <position position="334"/>
    </location>
</feature>
<feature type="sequence conflict" description="In Ref. 2; BAE26313." evidence="6" ref="2">
    <original>P</original>
    <variation>Q</variation>
    <location>
        <position position="353"/>
    </location>
</feature>
<comment type="function">
    <text evidence="1">Has apparently no steroid dehydrogenase activity. Controls bile acid (BA) and lipid metabolism in response to nutritional cues.</text>
</comment>
<comment type="subcellular location">
    <subcellularLocation>
        <location evidence="1">Peroxisome</location>
    </subcellularLocation>
    <subcellularLocation>
        <location evidence="5">Mitochondrion</location>
    </subcellularLocation>
</comment>
<comment type="tissue specificity">
    <text evidence="4">Widely expressed.</text>
</comment>
<comment type="induction">
    <text evidence="4 5">Up-regulated by cholesterol-rich food (PubMed:16240713). Induced by fasting (PubMed:38820148).</text>
</comment>
<comment type="similarity">
    <text evidence="6">Belongs to the short-chain dehydrogenases/reductases (SDR) family.</text>
</comment>
<comment type="sequence caution" evidence="6">
    <conflict type="frameshift">
        <sequence resource="EMBL-CDS" id="BAC39563"/>
    </conflict>
</comment>
<proteinExistence type="evidence at protein level"/>
<organism>
    <name type="scientific">Mus musculus</name>
    <name type="common">Mouse</name>
    <dbReference type="NCBI Taxonomy" id="10090"/>
    <lineage>
        <taxon>Eukaryota</taxon>
        <taxon>Metazoa</taxon>
        <taxon>Chordata</taxon>
        <taxon>Craniata</taxon>
        <taxon>Vertebrata</taxon>
        <taxon>Euteleostomi</taxon>
        <taxon>Mammalia</taxon>
        <taxon>Eutheria</taxon>
        <taxon>Euarchontoglires</taxon>
        <taxon>Glires</taxon>
        <taxon>Rodentia</taxon>
        <taxon>Myomorpha</taxon>
        <taxon>Muroidea</taxon>
        <taxon>Muridae</taxon>
        <taxon>Murinae</taxon>
        <taxon>Mus</taxon>
        <taxon>Mus</taxon>
    </lineage>
</organism>
<sequence>MLPNTGKLAGCTVFITGASRGIGKAIALKAAKDGANIVIAAKTTQKHPKLLGTIYTAAEEIEAAGGTALPCVVDVRDEQQINSAVEKAVEKFGGIDILVNNASAISLTNTLDTPTKRVDLMMNVNTRGTYLTSKACIPFLKKSKVGHILNLSPPLNLNPLWFKQHCAYTIAKYGMSMCVLGMAEEFRGEIAVNALWPRTAIHTAAMDMLGGSGVENQCRKVDIIADAAYSIFKRPKSFTGNFIIDENILKEEGIKNFDVYAIAPGHPLLPDFFLDEHPDAVMEEKESNDSVPEVKEEKLQLQEESQLQKQPQLQEQPQLQEKPQLQEKPQLQEQPQLQEKPQLQEQPQQREQPQLQQQPRPRQQPQPFVQSMLPQKPHFGAVEETFRIVKDSLSDEVVRATQAVYQFELSGEDGGTWFLDLKSKGGKVGHGEPSDRADVVMSMATDDFVKMFSGKLKPTMAFMSGKLKIKGNIALAIKLEKLMTQMNSRL</sequence>
<name>HSDL2_MOUSE</name>
<accession>Q2TPA8</accession>
<accession>Q3ULY5</accession>
<accession>Q3UVZ3</accession>
<accession>Q8C3H3</accession>
<accession>Q99LV2</accession>
<reference key="1">
    <citation type="journal article" date="2005" name="Mol. Biol. (Mosk.)">
        <title>Cloning and characterization of a novel mouse short-chain dehydrogenase/reductases cDNA mHsdl2, encoding a protein with a SDR domain and a SCP2 domain.</title>
        <authorList>
            <person name="Dai J."/>
            <person name="Li P."/>
            <person name="Ji C."/>
            <person name="Feng C."/>
            <person name="Gui M."/>
            <person name="Sun Y."/>
            <person name="Zhang J."/>
            <person name="Zhu J."/>
            <person name="Dou C."/>
            <person name="Gu S."/>
        </authorList>
    </citation>
    <scope>NUCLEOTIDE SEQUENCE [MRNA]</scope>
    <scope>TISSUE SPECIFICITY</scope>
    <scope>INDUCTION</scope>
    <source>
        <strain>C57BL/6J</strain>
    </source>
</reference>
<reference key="2">
    <citation type="journal article" date="2005" name="Science">
        <title>The transcriptional landscape of the mammalian genome.</title>
        <authorList>
            <person name="Carninci P."/>
            <person name="Kasukawa T."/>
            <person name="Katayama S."/>
            <person name="Gough J."/>
            <person name="Frith M.C."/>
            <person name="Maeda N."/>
            <person name="Oyama R."/>
            <person name="Ravasi T."/>
            <person name="Lenhard B."/>
            <person name="Wells C."/>
            <person name="Kodzius R."/>
            <person name="Shimokawa K."/>
            <person name="Bajic V.B."/>
            <person name="Brenner S.E."/>
            <person name="Batalov S."/>
            <person name="Forrest A.R."/>
            <person name="Zavolan M."/>
            <person name="Davis M.J."/>
            <person name="Wilming L.G."/>
            <person name="Aidinis V."/>
            <person name="Allen J.E."/>
            <person name="Ambesi-Impiombato A."/>
            <person name="Apweiler R."/>
            <person name="Aturaliya R.N."/>
            <person name="Bailey T.L."/>
            <person name="Bansal M."/>
            <person name="Baxter L."/>
            <person name="Beisel K.W."/>
            <person name="Bersano T."/>
            <person name="Bono H."/>
            <person name="Chalk A.M."/>
            <person name="Chiu K.P."/>
            <person name="Choudhary V."/>
            <person name="Christoffels A."/>
            <person name="Clutterbuck D.R."/>
            <person name="Crowe M.L."/>
            <person name="Dalla E."/>
            <person name="Dalrymple B.P."/>
            <person name="de Bono B."/>
            <person name="Della Gatta G."/>
            <person name="di Bernardo D."/>
            <person name="Down T."/>
            <person name="Engstrom P."/>
            <person name="Fagiolini M."/>
            <person name="Faulkner G."/>
            <person name="Fletcher C.F."/>
            <person name="Fukushima T."/>
            <person name="Furuno M."/>
            <person name="Futaki S."/>
            <person name="Gariboldi M."/>
            <person name="Georgii-Hemming P."/>
            <person name="Gingeras T.R."/>
            <person name="Gojobori T."/>
            <person name="Green R.E."/>
            <person name="Gustincich S."/>
            <person name="Harbers M."/>
            <person name="Hayashi Y."/>
            <person name="Hensch T.K."/>
            <person name="Hirokawa N."/>
            <person name="Hill D."/>
            <person name="Huminiecki L."/>
            <person name="Iacono M."/>
            <person name="Ikeo K."/>
            <person name="Iwama A."/>
            <person name="Ishikawa T."/>
            <person name="Jakt M."/>
            <person name="Kanapin A."/>
            <person name="Katoh M."/>
            <person name="Kawasawa Y."/>
            <person name="Kelso J."/>
            <person name="Kitamura H."/>
            <person name="Kitano H."/>
            <person name="Kollias G."/>
            <person name="Krishnan S.P."/>
            <person name="Kruger A."/>
            <person name="Kummerfeld S.K."/>
            <person name="Kurochkin I.V."/>
            <person name="Lareau L.F."/>
            <person name="Lazarevic D."/>
            <person name="Lipovich L."/>
            <person name="Liu J."/>
            <person name="Liuni S."/>
            <person name="McWilliam S."/>
            <person name="Madan Babu M."/>
            <person name="Madera M."/>
            <person name="Marchionni L."/>
            <person name="Matsuda H."/>
            <person name="Matsuzawa S."/>
            <person name="Miki H."/>
            <person name="Mignone F."/>
            <person name="Miyake S."/>
            <person name="Morris K."/>
            <person name="Mottagui-Tabar S."/>
            <person name="Mulder N."/>
            <person name="Nakano N."/>
            <person name="Nakauchi H."/>
            <person name="Ng P."/>
            <person name="Nilsson R."/>
            <person name="Nishiguchi S."/>
            <person name="Nishikawa S."/>
            <person name="Nori F."/>
            <person name="Ohara O."/>
            <person name="Okazaki Y."/>
            <person name="Orlando V."/>
            <person name="Pang K.C."/>
            <person name="Pavan W.J."/>
            <person name="Pavesi G."/>
            <person name="Pesole G."/>
            <person name="Petrovsky N."/>
            <person name="Piazza S."/>
            <person name="Reed J."/>
            <person name="Reid J.F."/>
            <person name="Ring B.Z."/>
            <person name="Ringwald M."/>
            <person name="Rost B."/>
            <person name="Ruan Y."/>
            <person name="Salzberg S.L."/>
            <person name="Sandelin A."/>
            <person name="Schneider C."/>
            <person name="Schoenbach C."/>
            <person name="Sekiguchi K."/>
            <person name="Semple C.A."/>
            <person name="Seno S."/>
            <person name="Sessa L."/>
            <person name="Sheng Y."/>
            <person name="Shibata Y."/>
            <person name="Shimada H."/>
            <person name="Shimada K."/>
            <person name="Silva D."/>
            <person name="Sinclair B."/>
            <person name="Sperling S."/>
            <person name="Stupka E."/>
            <person name="Sugiura K."/>
            <person name="Sultana R."/>
            <person name="Takenaka Y."/>
            <person name="Taki K."/>
            <person name="Tammoja K."/>
            <person name="Tan S.L."/>
            <person name="Tang S."/>
            <person name="Taylor M.S."/>
            <person name="Tegner J."/>
            <person name="Teichmann S.A."/>
            <person name="Ueda H.R."/>
            <person name="van Nimwegen E."/>
            <person name="Verardo R."/>
            <person name="Wei C.L."/>
            <person name="Yagi K."/>
            <person name="Yamanishi H."/>
            <person name="Zabarovsky E."/>
            <person name="Zhu S."/>
            <person name="Zimmer A."/>
            <person name="Hide W."/>
            <person name="Bult C."/>
            <person name="Grimmond S.M."/>
            <person name="Teasdale R.D."/>
            <person name="Liu E.T."/>
            <person name="Brusic V."/>
            <person name="Quackenbush J."/>
            <person name="Wahlestedt C."/>
            <person name="Mattick J.S."/>
            <person name="Hume D.A."/>
            <person name="Kai C."/>
            <person name="Sasaki D."/>
            <person name="Tomaru Y."/>
            <person name="Fukuda S."/>
            <person name="Kanamori-Katayama M."/>
            <person name="Suzuki M."/>
            <person name="Aoki J."/>
            <person name="Arakawa T."/>
            <person name="Iida J."/>
            <person name="Imamura K."/>
            <person name="Itoh M."/>
            <person name="Kato T."/>
            <person name="Kawaji H."/>
            <person name="Kawagashira N."/>
            <person name="Kawashima T."/>
            <person name="Kojima M."/>
            <person name="Kondo S."/>
            <person name="Konno H."/>
            <person name="Nakano K."/>
            <person name="Ninomiya N."/>
            <person name="Nishio T."/>
            <person name="Okada M."/>
            <person name="Plessy C."/>
            <person name="Shibata K."/>
            <person name="Shiraki T."/>
            <person name="Suzuki S."/>
            <person name="Tagami M."/>
            <person name="Waki K."/>
            <person name="Watahiki A."/>
            <person name="Okamura-Oho Y."/>
            <person name="Suzuki H."/>
            <person name="Kawai J."/>
            <person name="Hayashizaki Y."/>
        </authorList>
    </citation>
    <scope>NUCLEOTIDE SEQUENCE [LARGE SCALE MRNA]</scope>
    <source>
        <strain>C57BL/6J</strain>
        <tissue>Diencephalon</tissue>
        <tissue>Heart</tissue>
        <tissue>Mammary gland</tissue>
    </source>
</reference>
<reference key="3">
    <citation type="journal article" date="2009" name="PLoS Biol.">
        <title>Lineage-specific biology revealed by a finished genome assembly of the mouse.</title>
        <authorList>
            <person name="Church D.M."/>
            <person name="Goodstadt L."/>
            <person name="Hillier L.W."/>
            <person name="Zody M.C."/>
            <person name="Goldstein S."/>
            <person name="She X."/>
            <person name="Bult C.J."/>
            <person name="Agarwala R."/>
            <person name="Cherry J.L."/>
            <person name="DiCuccio M."/>
            <person name="Hlavina W."/>
            <person name="Kapustin Y."/>
            <person name="Meric P."/>
            <person name="Maglott D."/>
            <person name="Birtle Z."/>
            <person name="Marques A.C."/>
            <person name="Graves T."/>
            <person name="Zhou S."/>
            <person name="Teague B."/>
            <person name="Potamousis K."/>
            <person name="Churas C."/>
            <person name="Place M."/>
            <person name="Herschleb J."/>
            <person name="Runnheim R."/>
            <person name="Forrest D."/>
            <person name="Amos-Landgraf J."/>
            <person name="Schwartz D.C."/>
            <person name="Cheng Z."/>
            <person name="Lindblad-Toh K."/>
            <person name="Eichler E.E."/>
            <person name="Ponting C.P."/>
        </authorList>
    </citation>
    <scope>NUCLEOTIDE SEQUENCE [LARGE SCALE GENOMIC DNA]</scope>
    <source>
        <strain>C57BL/6J</strain>
    </source>
</reference>
<reference key="4">
    <citation type="journal article" date="2004" name="Genome Res.">
        <title>The status, quality, and expansion of the NIH full-length cDNA project: the Mammalian Gene Collection (MGC).</title>
        <authorList>
            <consortium name="The MGC Project Team"/>
        </authorList>
    </citation>
    <scope>NUCLEOTIDE SEQUENCE [LARGE SCALE MRNA]</scope>
    <source>
        <strain>C57BL/6J</strain>
        <strain>FVB/N</strain>
        <tissue>Mammary tumor</tissue>
    </source>
</reference>
<reference key="5">
    <citation type="journal article" date="2010" name="Cell">
        <title>A tissue-specific atlas of mouse protein phosphorylation and expression.</title>
        <authorList>
            <person name="Huttlin E.L."/>
            <person name="Jedrychowski M.P."/>
            <person name="Elias J.E."/>
            <person name="Goswami T."/>
            <person name="Rad R."/>
            <person name="Beausoleil S.A."/>
            <person name="Villen J."/>
            <person name="Haas W."/>
            <person name="Sowa M.E."/>
            <person name="Gygi S.P."/>
        </authorList>
    </citation>
    <scope>IDENTIFICATION BY MASS SPECTROMETRY [LARGE SCALE ANALYSIS]</scope>
    <source>
        <tissue>Brain</tissue>
        <tissue>Brown adipose tissue</tissue>
        <tissue>Heart</tissue>
        <tissue>Kidney</tissue>
        <tissue>Liver</tissue>
        <tissue>Lung</tissue>
        <tissue>Spleen</tissue>
        <tissue>Testis</tissue>
    </source>
</reference>
<reference key="6">
    <citation type="journal article" date="2013" name="Mol. Cell">
        <title>SIRT5-mediated lysine desuccinylation impacts diverse metabolic pathways.</title>
        <authorList>
            <person name="Park J."/>
            <person name="Chen Y."/>
            <person name="Tishkoff D.X."/>
            <person name="Peng C."/>
            <person name="Tan M."/>
            <person name="Dai L."/>
            <person name="Xie Z."/>
            <person name="Zhang Y."/>
            <person name="Zwaans B.M."/>
            <person name="Skinner M.E."/>
            <person name="Lombard D.B."/>
            <person name="Zhao Y."/>
        </authorList>
    </citation>
    <scope>SUCCINYLATION [LARGE SCALE ANALYSIS] AT LYS-390</scope>
    <scope>IDENTIFICATION BY MASS SPECTROMETRY [LARGE SCALE ANALYSIS]</scope>
    <source>
        <tissue>Liver</tissue>
    </source>
</reference>
<reference key="7">
    <citation type="journal article" date="2013" name="Proc. Natl. Acad. Sci. U.S.A.">
        <title>Label-free quantitative proteomics of the lysine acetylome in mitochondria identifies substrates of SIRT3 in metabolic pathways.</title>
        <authorList>
            <person name="Rardin M.J."/>
            <person name="Newman J.C."/>
            <person name="Held J.M."/>
            <person name="Cusack M.P."/>
            <person name="Sorensen D.J."/>
            <person name="Li B."/>
            <person name="Schilling B."/>
            <person name="Mooney S.D."/>
            <person name="Kahn C.R."/>
            <person name="Verdin E."/>
            <person name="Gibson B.W."/>
        </authorList>
    </citation>
    <scope>ACETYLATION [LARGE SCALE ANALYSIS] AT LYS-116</scope>
    <scope>IDENTIFICATION BY MASS SPECTROMETRY [LARGE SCALE ANALYSIS]</scope>
    <source>
        <tissue>Liver</tissue>
    </source>
</reference>
<reference key="8">
    <citation type="journal article" date="2024" name="Sci. Adv.">
        <title>HSDL2 links nutritional cues to bile acid and cholesterol homeostasis.</title>
        <authorList>
            <person name="Samson N."/>
            <person name="Bosoi C.R."/>
            <person name="Roy C."/>
            <person name="Turcotte L."/>
            <person name="Tribouillard L."/>
            <person name="Mouchiroud M."/>
            <person name="Berthiaume L."/>
            <person name="Trottier J."/>
            <person name="Silva H.C.G."/>
            <person name="Guerbette T."/>
            <person name="Plata-Gomez A.B."/>
            <person name="Besse-Patin A."/>
            <person name="Montoni A."/>
            <person name="Ilacqua N."/>
            <person name="Lamothe J."/>
            <person name="Citron Y.R."/>
            <person name="Gelinas Y."/>
            <person name="Gobeil S."/>
            <person name="Zoncu R."/>
            <person name="Caron A."/>
            <person name="Morissette M."/>
            <person name="Pellegrini L."/>
            <person name="Rochette P.J."/>
            <person name="Estall J.L."/>
            <person name="Efeyan A."/>
            <person name="Shum M."/>
            <person name="Audet-Walsh E."/>
            <person name="Barbier O."/>
            <person name="Marette A."/>
            <person name="Laplante M."/>
        </authorList>
    </citation>
    <scope>SUBCELLULAR LOCATION</scope>
    <scope>INDUCTION</scope>
</reference>
<evidence type="ECO:0000250" key="1">
    <source>
        <dbReference type="UniProtKB" id="Q6YN16"/>
    </source>
</evidence>
<evidence type="ECO:0000255" key="2"/>
<evidence type="ECO:0000256" key="3">
    <source>
        <dbReference type="SAM" id="MobiDB-lite"/>
    </source>
</evidence>
<evidence type="ECO:0000269" key="4">
    <source>
    </source>
</evidence>
<evidence type="ECO:0000269" key="5">
    <source>
    </source>
</evidence>
<evidence type="ECO:0000305" key="6"/>
<evidence type="ECO:0007744" key="7">
    <source>
    </source>
</evidence>
<evidence type="ECO:0007744" key="8">
    <source>
    </source>
</evidence>
<gene>
    <name type="primary">Hsdl2</name>
</gene>
<protein>
    <recommendedName>
        <fullName>Hydroxysteroid dehydrogenase-like protein 2</fullName>
        <ecNumber>1.-.-.-</ecNumber>
    </recommendedName>
</protein>
<keyword id="KW-0007">Acetylation</keyword>
<keyword id="KW-0379">Hydroxylation</keyword>
<keyword id="KW-0496">Mitochondrion</keyword>
<keyword id="KW-0521">NADP</keyword>
<keyword id="KW-0560">Oxidoreductase</keyword>
<keyword id="KW-0576">Peroxisome</keyword>
<keyword id="KW-1185">Reference proteome</keyword>